<proteinExistence type="inferred from homology"/>
<organism>
    <name type="scientific">Cupriavidus metallidurans (strain ATCC 43123 / DSM 2839 / NBRC 102507 / CH34)</name>
    <name type="common">Ralstonia metallidurans</name>
    <dbReference type="NCBI Taxonomy" id="266264"/>
    <lineage>
        <taxon>Bacteria</taxon>
        <taxon>Pseudomonadati</taxon>
        <taxon>Pseudomonadota</taxon>
        <taxon>Betaproteobacteria</taxon>
        <taxon>Burkholderiales</taxon>
        <taxon>Burkholderiaceae</taxon>
        <taxon>Cupriavidus</taxon>
    </lineage>
</organism>
<keyword id="KW-0012">Acyltransferase</keyword>
<keyword id="KW-0963">Cytoplasm</keyword>
<keyword id="KW-0441">Lipid A biosynthesis</keyword>
<keyword id="KW-0444">Lipid biosynthesis</keyword>
<keyword id="KW-0443">Lipid metabolism</keyword>
<keyword id="KW-1185">Reference proteome</keyword>
<keyword id="KW-0677">Repeat</keyword>
<keyword id="KW-0808">Transferase</keyword>
<protein>
    <recommendedName>
        <fullName evidence="1">Acyl-[acyl-carrier-protein]--UDP-N-acetylglucosamine O-acyltransferase</fullName>
        <shortName evidence="1">UDP-N-acetylglucosamine acyltransferase</shortName>
        <ecNumber evidence="1">2.3.1.129</ecNumber>
    </recommendedName>
</protein>
<evidence type="ECO:0000255" key="1">
    <source>
        <dbReference type="HAMAP-Rule" id="MF_00387"/>
    </source>
</evidence>
<feature type="chain" id="PRO_0000302597" description="Acyl-[acyl-carrier-protein]--UDP-N-acetylglucosamine O-acyltransferase">
    <location>
        <begin position="1"/>
        <end position="267"/>
    </location>
</feature>
<sequence>MTQIHSTALVDPKAELADDVTVGPFSIVGPNVRIGSGTRIGSHTTVEGHTTIGAGNRIGPYASVGGVPQDMKYANEPTQLVIGDRNTIREFTTIHTGTVQDRGVTSLGNDNWIMAYVHIAHDCSVGNHTVFSSNAQIAGHVEVGDWAILGGMSGVHQYVRIGAHAMLGGASALVQDVPPFVIAASDKNGNKATPHGINVEGLRRRGFDAGQIAALRQAYKLLYKSDLSFDDARAEITAMLGQVDATTAVPLQAFVEFLAATQRGIVR</sequence>
<gene>
    <name evidence="1" type="primary">lpxA</name>
    <name type="ordered locus">Rmet_1447</name>
</gene>
<name>LPXA_CUPMC</name>
<comment type="function">
    <text evidence="1">Involved in the biosynthesis of lipid A, a phosphorylated glycolipid that anchors the lipopolysaccharide to the outer membrane of the cell.</text>
</comment>
<comment type="catalytic activity">
    <reaction evidence="1">
        <text>a (3R)-hydroxyacyl-[ACP] + UDP-N-acetyl-alpha-D-glucosamine = a UDP-3-O-[(3R)-3-hydroxyacyl]-N-acetyl-alpha-D-glucosamine + holo-[ACP]</text>
        <dbReference type="Rhea" id="RHEA:67812"/>
        <dbReference type="Rhea" id="RHEA-COMP:9685"/>
        <dbReference type="Rhea" id="RHEA-COMP:9945"/>
        <dbReference type="ChEBI" id="CHEBI:57705"/>
        <dbReference type="ChEBI" id="CHEBI:64479"/>
        <dbReference type="ChEBI" id="CHEBI:78827"/>
        <dbReference type="ChEBI" id="CHEBI:173225"/>
        <dbReference type="EC" id="2.3.1.129"/>
    </reaction>
</comment>
<comment type="pathway">
    <text evidence="1">Glycolipid biosynthesis; lipid IV(A) biosynthesis; lipid IV(A) from (3R)-3-hydroxytetradecanoyl-[acyl-carrier-protein] and UDP-N-acetyl-alpha-D-glucosamine: step 1/6.</text>
</comment>
<comment type="subunit">
    <text evidence="1">Homotrimer.</text>
</comment>
<comment type="subcellular location">
    <subcellularLocation>
        <location evidence="1">Cytoplasm</location>
    </subcellularLocation>
</comment>
<comment type="similarity">
    <text evidence="1">Belongs to the transferase hexapeptide repeat family. LpxA subfamily.</text>
</comment>
<dbReference type="EC" id="2.3.1.129" evidence="1"/>
<dbReference type="EMBL" id="CP000352">
    <property type="protein sequence ID" value="ABF08330.1"/>
    <property type="molecule type" value="Genomic_DNA"/>
</dbReference>
<dbReference type="RefSeq" id="WP_011516196.1">
    <property type="nucleotide sequence ID" value="NC_007973.1"/>
</dbReference>
<dbReference type="SMR" id="Q1LNE6"/>
<dbReference type="STRING" id="266264.Rmet_1447"/>
<dbReference type="KEGG" id="rme:Rmet_1447"/>
<dbReference type="eggNOG" id="COG1043">
    <property type="taxonomic scope" value="Bacteria"/>
</dbReference>
<dbReference type="HOGENOM" id="CLU_061249_0_0_4"/>
<dbReference type="UniPathway" id="UPA00359">
    <property type="reaction ID" value="UER00477"/>
</dbReference>
<dbReference type="Proteomes" id="UP000002429">
    <property type="component" value="Chromosome"/>
</dbReference>
<dbReference type="GO" id="GO:0005737">
    <property type="term" value="C:cytoplasm"/>
    <property type="evidence" value="ECO:0007669"/>
    <property type="project" value="UniProtKB-SubCell"/>
</dbReference>
<dbReference type="GO" id="GO:0016020">
    <property type="term" value="C:membrane"/>
    <property type="evidence" value="ECO:0007669"/>
    <property type="project" value="GOC"/>
</dbReference>
<dbReference type="GO" id="GO:0008780">
    <property type="term" value="F:acyl-[acyl-carrier-protein]-UDP-N-acetylglucosamine O-acyltransferase activity"/>
    <property type="evidence" value="ECO:0007669"/>
    <property type="project" value="UniProtKB-UniRule"/>
</dbReference>
<dbReference type="GO" id="GO:0009245">
    <property type="term" value="P:lipid A biosynthetic process"/>
    <property type="evidence" value="ECO:0007669"/>
    <property type="project" value="UniProtKB-UniRule"/>
</dbReference>
<dbReference type="CDD" id="cd03351">
    <property type="entry name" value="LbH_UDP-GlcNAc_AT"/>
    <property type="match status" value="1"/>
</dbReference>
<dbReference type="Gene3D" id="2.160.10.10">
    <property type="entry name" value="Hexapeptide repeat proteins"/>
    <property type="match status" value="1"/>
</dbReference>
<dbReference type="Gene3D" id="1.20.1180.10">
    <property type="entry name" value="Udp N-acetylglucosamine O-acyltransferase, C-terminal domain"/>
    <property type="match status" value="1"/>
</dbReference>
<dbReference type="HAMAP" id="MF_00387">
    <property type="entry name" value="LpxA"/>
    <property type="match status" value="1"/>
</dbReference>
<dbReference type="InterPro" id="IPR029098">
    <property type="entry name" value="Acetyltransf_C"/>
</dbReference>
<dbReference type="InterPro" id="IPR037157">
    <property type="entry name" value="Acetyltransf_C_sf"/>
</dbReference>
<dbReference type="InterPro" id="IPR001451">
    <property type="entry name" value="Hexapep"/>
</dbReference>
<dbReference type="InterPro" id="IPR018357">
    <property type="entry name" value="Hexapep_transf_CS"/>
</dbReference>
<dbReference type="InterPro" id="IPR010137">
    <property type="entry name" value="Lipid_A_LpxA"/>
</dbReference>
<dbReference type="InterPro" id="IPR011004">
    <property type="entry name" value="Trimer_LpxA-like_sf"/>
</dbReference>
<dbReference type="NCBIfam" id="TIGR01852">
    <property type="entry name" value="lipid_A_lpxA"/>
    <property type="match status" value="1"/>
</dbReference>
<dbReference type="NCBIfam" id="NF003657">
    <property type="entry name" value="PRK05289.1"/>
    <property type="match status" value="1"/>
</dbReference>
<dbReference type="PANTHER" id="PTHR43480">
    <property type="entry name" value="ACYL-[ACYL-CARRIER-PROTEIN]--UDP-N-ACETYLGLUCOSAMINE O-ACYLTRANSFERASE"/>
    <property type="match status" value="1"/>
</dbReference>
<dbReference type="PANTHER" id="PTHR43480:SF1">
    <property type="entry name" value="ACYL-[ACYL-CARRIER-PROTEIN]--UDP-N-ACETYLGLUCOSAMINE O-ACYLTRANSFERASE, MITOCHONDRIAL-RELATED"/>
    <property type="match status" value="1"/>
</dbReference>
<dbReference type="Pfam" id="PF13720">
    <property type="entry name" value="Acetyltransf_11"/>
    <property type="match status" value="1"/>
</dbReference>
<dbReference type="Pfam" id="PF00132">
    <property type="entry name" value="Hexapep"/>
    <property type="match status" value="2"/>
</dbReference>
<dbReference type="PIRSF" id="PIRSF000456">
    <property type="entry name" value="UDP-GlcNAc_acltr"/>
    <property type="match status" value="1"/>
</dbReference>
<dbReference type="SUPFAM" id="SSF51161">
    <property type="entry name" value="Trimeric LpxA-like enzymes"/>
    <property type="match status" value="1"/>
</dbReference>
<dbReference type="PROSITE" id="PS00101">
    <property type="entry name" value="HEXAPEP_TRANSFERASES"/>
    <property type="match status" value="1"/>
</dbReference>
<reference key="1">
    <citation type="journal article" date="2010" name="PLoS ONE">
        <title>The complete genome sequence of Cupriavidus metallidurans strain CH34, a master survivalist in harsh and anthropogenic environments.</title>
        <authorList>
            <person name="Janssen P.J."/>
            <person name="Van Houdt R."/>
            <person name="Moors H."/>
            <person name="Monsieurs P."/>
            <person name="Morin N."/>
            <person name="Michaux A."/>
            <person name="Benotmane M.A."/>
            <person name="Leys N."/>
            <person name="Vallaeys T."/>
            <person name="Lapidus A."/>
            <person name="Monchy S."/>
            <person name="Medigue C."/>
            <person name="Taghavi S."/>
            <person name="McCorkle S."/>
            <person name="Dunn J."/>
            <person name="van der Lelie D."/>
            <person name="Mergeay M."/>
        </authorList>
    </citation>
    <scope>NUCLEOTIDE SEQUENCE [LARGE SCALE GENOMIC DNA]</scope>
    <source>
        <strain>ATCC 43123 / DSM 2839 / NBRC 102507 / CH34</strain>
    </source>
</reference>
<accession>Q1LNE6</accession>